<evidence type="ECO:0000250" key="1"/>
<evidence type="ECO:0000305" key="2"/>
<name>RR12_TETOB</name>
<comment type="function">
    <text evidence="1">With S4 and S5 plays an important role in translational accuracy. Located at the interface of the 30S and 50S subunits (By similarity).</text>
</comment>
<comment type="subunit">
    <text evidence="1">Part of the 30S ribosomal subunit.</text>
</comment>
<comment type="subcellular location">
    <subcellularLocation>
        <location>Plastid</location>
        <location>Chloroplast</location>
    </subcellularLocation>
</comment>
<comment type="similarity">
    <text evidence="2">Belongs to the universal ribosomal protein uS12 family.</text>
</comment>
<gene>
    <name type="primary">rps12</name>
</gene>
<accession>Q1KVX0</accession>
<reference key="1">
    <citation type="journal article" date="2006" name="BMC Evol. Biol.">
        <title>The complete chloroplast genome sequence of the chlorophycean green alga Scenedesmus obliquus reveals a compact gene organization and a biased distribution of genes on the two DNA strands.</title>
        <authorList>
            <person name="de Cambiaire J.-C."/>
            <person name="Otis C."/>
            <person name="Lemieux C."/>
            <person name="Turmel M."/>
        </authorList>
    </citation>
    <scope>NUCLEOTIDE SEQUENCE [LARGE SCALE GENOMIC DNA]</scope>
    <source>
        <strain>UTEX 393</strain>
    </source>
</reference>
<keyword id="KW-0150">Chloroplast</keyword>
<keyword id="KW-0934">Plastid</keyword>
<keyword id="KW-0687">Ribonucleoprotein</keyword>
<keyword id="KW-0689">Ribosomal protein</keyword>
<keyword id="KW-0694">RNA-binding</keyword>
<keyword id="KW-0699">rRNA-binding</keyword>
<organism>
    <name type="scientific">Tetradesmus obliquus</name>
    <name type="common">Green alga</name>
    <name type="synonym">Acutodesmus obliquus</name>
    <dbReference type="NCBI Taxonomy" id="3088"/>
    <lineage>
        <taxon>Eukaryota</taxon>
        <taxon>Viridiplantae</taxon>
        <taxon>Chlorophyta</taxon>
        <taxon>core chlorophytes</taxon>
        <taxon>Chlorophyceae</taxon>
        <taxon>CS clade</taxon>
        <taxon>Sphaeropleales</taxon>
        <taxon>Scenedesmaceae</taxon>
        <taxon>Tetradesmus</taxon>
    </lineage>
</organism>
<protein>
    <recommendedName>
        <fullName evidence="2">Small ribosomal subunit protein uS12c</fullName>
    </recommendedName>
    <alternativeName>
        <fullName>30S ribosomal protein S12, chloroplastic</fullName>
    </alternativeName>
</protein>
<geneLocation type="chloroplast"/>
<dbReference type="EMBL" id="DQ396875">
    <property type="protein sequence ID" value="ABD48236.1"/>
    <property type="molecule type" value="Genomic_DNA"/>
</dbReference>
<dbReference type="RefSeq" id="YP_635954.1">
    <property type="nucleotide sequence ID" value="NC_008101.1"/>
</dbReference>
<dbReference type="SMR" id="Q1KVX0"/>
<dbReference type="GeneID" id="4099821"/>
<dbReference type="GO" id="GO:0009507">
    <property type="term" value="C:chloroplast"/>
    <property type="evidence" value="ECO:0007669"/>
    <property type="project" value="UniProtKB-SubCell"/>
</dbReference>
<dbReference type="GO" id="GO:0015935">
    <property type="term" value="C:small ribosomal subunit"/>
    <property type="evidence" value="ECO:0007669"/>
    <property type="project" value="InterPro"/>
</dbReference>
<dbReference type="GO" id="GO:0019843">
    <property type="term" value="F:rRNA binding"/>
    <property type="evidence" value="ECO:0007669"/>
    <property type="project" value="UniProtKB-UniRule"/>
</dbReference>
<dbReference type="GO" id="GO:0003735">
    <property type="term" value="F:structural constituent of ribosome"/>
    <property type="evidence" value="ECO:0007669"/>
    <property type="project" value="InterPro"/>
</dbReference>
<dbReference type="GO" id="GO:0006412">
    <property type="term" value="P:translation"/>
    <property type="evidence" value="ECO:0007669"/>
    <property type="project" value="UniProtKB-UniRule"/>
</dbReference>
<dbReference type="CDD" id="cd03368">
    <property type="entry name" value="Ribosomal_S12"/>
    <property type="match status" value="1"/>
</dbReference>
<dbReference type="FunFam" id="2.40.50.140:FF:000001">
    <property type="entry name" value="30S ribosomal protein S12"/>
    <property type="match status" value="1"/>
</dbReference>
<dbReference type="Gene3D" id="2.40.50.140">
    <property type="entry name" value="Nucleic acid-binding proteins"/>
    <property type="match status" value="1"/>
</dbReference>
<dbReference type="HAMAP" id="MF_00403_B">
    <property type="entry name" value="Ribosomal_uS12_B"/>
    <property type="match status" value="1"/>
</dbReference>
<dbReference type="InterPro" id="IPR012340">
    <property type="entry name" value="NA-bd_OB-fold"/>
</dbReference>
<dbReference type="InterPro" id="IPR006032">
    <property type="entry name" value="Ribosomal_uS12"/>
</dbReference>
<dbReference type="InterPro" id="IPR005679">
    <property type="entry name" value="Ribosomal_uS12_bac"/>
</dbReference>
<dbReference type="NCBIfam" id="TIGR00981">
    <property type="entry name" value="rpsL_bact"/>
    <property type="match status" value="1"/>
</dbReference>
<dbReference type="PANTHER" id="PTHR11652">
    <property type="entry name" value="30S RIBOSOMAL PROTEIN S12 FAMILY MEMBER"/>
    <property type="match status" value="1"/>
</dbReference>
<dbReference type="Pfam" id="PF00164">
    <property type="entry name" value="Ribosom_S12_S23"/>
    <property type="match status" value="1"/>
</dbReference>
<dbReference type="PIRSF" id="PIRSF002133">
    <property type="entry name" value="Ribosomal_S12/S23"/>
    <property type="match status" value="1"/>
</dbReference>
<dbReference type="PRINTS" id="PR01034">
    <property type="entry name" value="RIBOSOMALS12"/>
</dbReference>
<dbReference type="SUPFAM" id="SSF50249">
    <property type="entry name" value="Nucleic acid-binding proteins"/>
    <property type="match status" value="1"/>
</dbReference>
<dbReference type="PROSITE" id="PS00055">
    <property type="entry name" value="RIBOSOMAL_S12"/>
    <property type="match status" value="1"/>
</dbReference>
<proteinExistence type="inferred from homology"/>
<feature type="chain" id="PRO_0000276628" description="Small ribosomal subunit protein uS12c">
    <location>
        <begin position="1"/>
        <end position="130"/>
    </location>
</feature>
<sequence length="130" mass="14241">MPTIQQLIRSARKKVSKKTKAPALKSCAQRRGICLRVYTVTPKKPNSALRKVARVRLTSGFEVTAYIPGIGHNLQEHAVVLVRGGRVKDLPGVRYHIVRGTLDTAGVKNRVQSRSKYGVKLAATKAAAKK</sequence>